<dbReference type="EMBL" id="CR378669">
    <property type="protein sequence ID" value="CAG20365.1"/>
    <property type="molecule type" value="Genomic_DNA"/>
</dbReference>
<dbReference type="RefSeq" id="WP_006231981.1">
    <property type="nucleotide sequence ID" value="NC_006370.1"/>
</dbReference>
<dbReference type="SMR" id="Q6LQR1"/>
<dbReference type="STRING" id="298386.PBPRA1961"/>
<dbReference type="KEGG" id="ppr:PBPRA1961"/>
<dbReference type="eggNOG" id="COG2926">
    <property type="taxonomic scope" value="Bacteria"/>
</dbReference>
<dbReference type="HOGENOM" id="CLU_153146_0_0_6"/>
<dbReference type="Proteomes" id="UP000000593">
    <property type="component" value="Chromosome 1"/>
</dbReference>
<dbReference type="GO" id="GO:0005829">
    <property type="term" value="C:cytosol"/>
    <property type="evidence" value="ECO:0007669"/>
    <property type="project" value="TreeGrafter"/>
</dbReference>
<dbReference type="HAMAP" id="MF_00683">
    <property type="entry name" value="Pole_loc_TmaR"/>
    <property type="match status" value="1"/>
</dbReference>
<dbReference type="InterPro" id="IPR007458">
    <property type="entry name" value="DUF496"/>
</dbReference>
<dbReference type="NCBIfam" id="NF003844">
    <property type="entry name" value="PRK05423.1"/>
    <property type="match status" value="1"/>
</dbReference>
<dbReference type="PANTHER" id="PTHR39591">
    <property type="entry name" value="UPF0265 PROTEIN YEEX"/>
    <property type="match status" value="1"/>
</dbReference>
<dbReference type="PANTHER" id="PTHR39591:SF1">
    <property type="entry name" value="UPF0265 PROTEIN YEEX"/>
    <property type="match status" value="1"/>
</dbReference>
<dbReference type="Pfam" id="PF04363">
    <property type="entry name" value="DUF496"/>
    <property type="match status" value="1"/>
</dbReference>
<dbReference type="PIRSF" id="PIRSF028773">
    <property type="entry name" value="UCP028773"/>
    <property type="match status" value="1"/>
</dbReference>
<name>TMAR_PHOPR</name>
<keyword id="KW-0175">Coiled coil</keyword>
<keyword id="KW-0963">Cytoplasm</keyword>
<keyword id="KW-1185">Reference proteome</keyword>
<reference key="1">
    <citation type="journal article" date="2005" name="Science">
        <title>Life at depth: Photobacterium profundum genome sequence and expression analysis.</title>
        <authorList>
            <person name="Vezzi A."/>
            <person name="Campanaro S."/>
            <person name="D'Angelo M."/>
            <person name="Simonato F."/>
            <person name="Vitulo N."/>
            <person name="Lauro F.M."/>
            <person name="Cestaro A."/>
            <person name="Malacrida G."/>
            <person name="Simionati B."/>
            <person name="Cannata N."/>
            <person name="Romualdi C."/>
            <person name="Bartlett D.H."/>
            <person name="Valle G."/>
        </authorList>
    </citation>
    <scope>NUCLEOTIDE SEQUENCE [LARGE SCALE GENOMIC DNA]</scope>
    <source>
        <strain>ATCC BAA-1253 / SS9</strain>
    </source>
</reference>
<proteinExistence type="inferred from homology"/>
<accession>Q6LQR1</accession>
<comment type="function">
    <text evidence="1">Pole-localizer protein involved in the regulation of several cellular processes.</text>
</comment>
<comment type="subcellular location">
    <subcellularLocation>
        <location evidence="1">Cytoplasm</location>
    </subcellularLocation>
</comment>
<comment type="similarity">
    <text evidence="1">Belongs to the pole-localizer TmaR family.</text>
</comment>
<protein>
    <recommendedName>
        <fullName evidence="1">Pole-localizer protein TmaR</fullName>
    </recommendedName>
</protein>
<organism>
    <name type="scientific">Photobacterium profundum (strain SS9)</name>
    <dbReference type="NCBI Taxonomy" id="298386"/>
    <lineage>
        <taxon>Bacteria</taxon>
        <taxon>Pseudomonadati</taxon>
        <taxon>Pseudomonadota</taxon>
        <taxon>Gammaproteobacteria</taxon>
        <taxon>Vibrionales</taxon>
        <taxon>Vibrionaceae</taxon>
        <taxon>Photobacterium</taxon>
    </lineage>
</organism>
<evidence type="ECO:0000255" key="1">
    <source>
        <dbReference type="HAMAP-Rule" id="MF_00683"/>
    </source>
</evidence>
<feature type="chain" id="PRO_1000044934" description="Pole-localizer protein TmaR">
    <location>
        <begin position="1"/>
        <end position="101"/>
    </location>
</feature>
<feature type="coiled-coil region" evidence="1">
    <location>
        <begin position="14"/>
        <end position="43"/>
    </location>
</feature>
<feature type="coiled-coil region" evidence="1">
    <location>
        <begin position="76"/>
        <end position="96"/>
    </location>
</feature>
<sequence>MNNILELVRQTRRKNKLKREILDNDRKIRDNRKRVELLENLLDYIRPDMSQEAILEIVENMKGDYEDRVDDHIIVSAELSKERREVSKNVKDLKKAEIAHK</sequence>
<gene>
    <name evidence="1" type="primary">tmaR</name>
    <name type="ordered locus">PBPRA1961</name>
</gene>